<gene>
    <name evidence="1" type="primary">pgk</name>
    <name type="ordered locus">TK1146</name>
</gene>
<accession>Q5JIG7</accession>
<proteinExistence type="inferred from homology"/>
<sequence>MFRITDFTYEGKTVFLRADLNSPVEKGRITSDARFRAVLPTIQHLLDNGAKLVIATHQSRPYKGDYITTEEHAQILSRLLGQEVEYVEDIFGKYARERISSLKPGEAIILENLRFSAEEVFNRSIEECEKTFFVRKLAPLIDYVVNDAFATAHRSQPSLVGFARLKPMIMGKLMETEVDALSKAYESEERPRVYVLGGAKVDDSLRVAENVLRKGKADLILTGGLVGQIFTLAKGFDLGDANIEFLHRKGLLELVDWAEKILDEFYPYVRTPVDFAIDYKGERLEVDLLGGEKRLFDQYPILDIGSRTVEKYREILIGAKIIVANGPMGVFEREEFAVGTVGVFRAIGESPAFSVVGGGHSIASIYRYNITGISHISTGGGAMLSFFAGEELPVLKALKISYERFKDRVKE</sequence>
<feature type="chain" id="PRO_0000146068" description="Phosphoglycerate kinase">
    <location>
        <begin position="1"/>
        <end position="411"/>
    </location>
</feature>
<feature type="binding site" evidence="1">
    <location>
        <begin position="19"/>
        <end position="21"/>
    </location>
    <ligand>
        <name>substrate</name>
    </ligand>
</feature>
<feature type="binding site" evidence="1">
    <location>
        <position position="34"/>
    </location>
    <ligand>
        <name>substrate</name>
    </ligand>
</feature>
<feature type="binding site" evidence="1">
    <location>
        <begin position="57"/>
        <end position="60"/>
    </location>
    <ligand>
        <name>substrate</name>
    </ligand>
</feature>
<feature type="binding site" evidence="1">
    <location>
        <position position="114"/>
    </location>
    <ligand>
        <name>substrate</name>
    </ligand>
</feature>
<feature type="binding site" evidence="1">
    <location>
        <position position="154"/>
    </location>
    <ligand>
        <name>substrate</name>
    </ligand>
</feature>
<feature type="binding site" evidence="1">
    <location>
        <position position="332"/>
    </location>
    <ligand>
        <name>ATP</name>
        <dbReference type="ChEBI" id="CHEBI:30616"/>
    </ligand>
</feature>
<feature type="binding site" evidence="1">
    <location>
        <begin position="358"/>
        <end position="361"/>
    </location>
    <ligand>
        <name>ATP</name>
        <dbReference type="ChEBI" id="CHEBI:30616"/>
    </ligand>
</feature>
<reference key="1">
    <citation type="journal article" date="2005" name="Genome Res.">
        <title>Complete genome sequence of the hyperthermophilic archaeon Thermococcus kodakaraensis KOD1 and comparison with Pyrococcus genomes.</title>
        <authorList>
            <person name="Fukui T."/>
            <person name="Atomi H."/>
            <person name="Kanai T."/>
            <person name="Matsumi R."/>
            <person name="Fujiwara S."/>
            <person name="Imanaka T."/>
        </authorList>
    </citation>
    <scope>NUCLEOTIDE SEQUENCE [LARGE SCALE GENOMIC DNA]</scope>
    <source>
        <strain>ATCC BAA-918 / JCM 12380 / KOD1</strain>
    </source>
</reference>
<dbReference type="EC" id="2.7.2.3" evidence="1"/>
<dbReference type="EMBL" id="AP006878">
    <property type="protein sequence ID" value="BAD85335.1"/>
    <property type="molecule type" value="Genomic_DNA"/>
</dbReference>
<dbReference type="RefSeq" id="WP_011250097.1">
    <property type="nucleotide sequence ID" value="NC_006624.1"/>
</dbReference>
<dbReference type="SMR" id="Q5JIG7"/>
<dbReference type="FunCoup" id="Q5JIG7">
    <property type="interactions" value="138"/>
</dbReference>
<dbReference type="STRING" id="69014.TK1146"/>
<dbReference type="EnsemblBacteria" id="BAD85335">
    <property type="protein sequence ID" value="BAD85335"/>
    <property type="gene ID" value="TK1146"/>
</dbReference>
<dbReference type="GeneID" id="78447662"/>
<dbReference type="KEGG" id="tko:TK1146"/>
<dbReference type="PATRIC" id="fig|69014.16.peg.1122"/>
<dbReference type="eggNOG" id="arCOG00496">
    <property type="taxonomic scope" value="Archaea"/>
</dbReference>
<dbReference type="HOGENOM" id="CLU_025427_0_2_2"/>
<dbReference type="InParanoid" id="Q5JIG7"/>
<dbReference type="OrthoDB" id="6575at2157"/>
<dbReference type="PhylomeDB" id="Q5JIG7"/>
<dbReference type="UniPathway" id="UPA00109">
    <property type="reaction ID" value="UER00185"/>
</dbReference>
<dbReference type="Proteomes" id="UP000000536">
    <property type="component" value="Chromosome"/>
</dbReference>
<dbReference type="GO" id="GO:0005829">
    <property type="term" value="C:cytosol"/>
    <property type="evidence" value="ECO:0000318"/>
    <property type="project" value="GO_Central"/>
</dbReference>
<dbReference type="GO" id="GO:0043531">
    <property type="term" value="F:ADP binding"/>
    <property type="evidence" value="ECO:0000318"/>
    <property type="project" value="GO_Central"/>
</dbReference>
<dbReference type="GO" id="GO:0005524">
    <property type="term" value="F:ATP binding"/>
    <property type="evidence" value="ECO:0000318"/>
    <property type="project" value="GO_Central"/>
</dbReference>
<dbReference type="GO" id="GO:0004618">
    <property type="term" value="F:phosphoglycerate kinase activity"/>
    <property type="evidence" value="ECO:0000318"/>
    <property type="project" value="GO_Central"/>
</dbReference>
<dbReference type="GO" id="GO:0006094">
    <property type="term" value="P:gluconeogenesis"/>
    <property type="evidence" value="ECO:0000318"/>
    <property type="project" value="GO_Central"/>
</dbReference>
<dbReference type="GO" id="GO:0006096">
    <property type="term" value="P:glycolytic process"/>
    <property type="evidence" value="ECO:0000318"/>
    <property type="project" value="GO_Central"/>
</dbReference>
<dbReference type="FunFam" id="3.40.50.1260:FF:000006">
    <property type="entry name" value="Phosphoglycerate kinase"/>
    <property type="match status" value="1"/>
</dbReference>
<dbReference type="FunFam" id="3.40.50.1260:FF:000012">
    <property type="entry name" value="Phosphoglycerate kinase"/>
    <property type="match status" value="1"/>
</dbReference>
<dbReference type="Gene3D" id="3.40.50.1260">
    <property type="entry name" value="Phosphoglycerate kinase, N-terminal domain"/>
    <property type="match status" value="2"/>
</dbReference>
<dbReference type="HAMAP" id="MF_00145">
    <property type="entry name" value="Phosphoglyc_kinase"/>
    <property type="match status" value="1"/>
</dbReference>
<dbReference type="InterPro" id="IPR001576">
    <property type="entry name" value="Phosphoglycerate_kinase"/>
</dbReference>
<dbReference type="InterPro" id="IPR015911">
    <property type="entry name" value="Phosphoglycerate_kinase_CS"/>
</dbReference>
<dbReference type="InterPro" id="IPR015824">
    <property type="entry name" value="Phosphoglycerate_kinase_N"/>
</dbReference>
<dbReference type="InterPro" id="IPR036043">
    <property type="entry name" value="Phosphoglycerate_kinase_sf"/>
</dbReference>
<dbReference type="PANTHER" id="PTHR11406">
    <property type="entry name" value="PHOSPHOGLYCERATE KINASE"/>
    <property type="match status" value="1"/>
</dbReference>
<dbReference type="PANTHER" id="PTHR11406:SF23">
    <property type="entry name" value="PHOSPHOGLYCERATE KINASE 1, CHLOROPLASTIC-RELATED"/>
    <property type="match status" value="1"/>
</dbReference>
<dbReference type="Pfam" id="PF00162">
    <property type="entry name" value="PGK"/>
    <property type="match status" value="1"/>
</dbReference>
<dbReference type="PIRSF" id="PIRSF000724">
    <property type="entry name" value="Pgk"/>
    <property type="match status" value="1"/>
</dbReference>
<dbReference type="PRINTS" id="PR00477">
    <property type="entry name" value="PHGLYCKINASE"/>
</dbReference>
<dbReference type="SUPFAM" id="SSF53748">
    <property type="entry name" value="Phosphoglycerate kinase"/>
    <property type="match status" value="1"/>
</dbReference>
<dbReference type="PROSITE" id="PS00111">
    <property type="entry name" value="PGLYCERATE_KINASE"/>
    <property type="match status" value="1"/>
</dbReference>
<evidence type="ECO:0000255" key="1">
    <source>
        <dbReference type="HAMAP-Rule" id="MF_00145"/>
    </source>
</evidence>
<keyword id="KW-0067">ATP-binding</keyword>
<keyword id="KW-0963">Cytoplasm</keyword>
<keyword id="KW-0324">Glycolysis</keyword>
<keyword id="KW-0418">Kinase</keyword>
<keyword id="KW-0547">Nucleotide-binding</keyword>
<keyword id="KW-1185">Reference proteome</keyword>
<keyword id="KW-0808">Transferase</keyword>
<organism>
    <name type="scientific">Thermococcus kodakarensis (strain ATCC BAA-918 / JCM 12380 / KOD1)</name>
    <name type="common">Pyrococcus kodakaraensis (strain KOD1)</name>
    <dbReference type="NCBI Taxonomy" id="69014"/>
    <lineage>
        <taxon>Archaea</taxon>
        <taxon>Methanobacteriati</taxon>
        <taxon>Methanobacteriota</taxon>
        <taxon>Thermococci</taxon>
        <taxon>Thermococcales</taxon>
        <taxon>Thermococcaceae</taxon>
        <taxon>Thermococcus</taxon>
    </lineage>
</organism>
<comment type="catalytic activity">
    <reaction evidence="1">
        <text>(2R)-3-phosphoglycerate + ATP = (2R)-3-phospho-glyceroyl phosphate + ADP</text>
        <dbReference type="Rhea" id="RHEA:14801"/>
        <dbReference type="ChEBI" id="CHEBI:30616"/>
        <dbReference type="ChEBI" id="CHEBI:57604"/>
        <dbReference type="ChEBI" id="CHEBI:58272"/>
        <dbReference type="ChEBI" id="CHEBI:456216"/>
        <dbReference type="EC" id="2.7.2.3"/>
    </reaction>
</comment>
<comment type="pathway">
    <text evidence="1">Carbohydrate degradation; glycolysis; pyruvate from D-glyceraldehyde 3-phosphate: step 2/5.</text>
</comment>
<comment type="subunit">
    <text evidence="1">Monomer.</text>
</comment>
<comment type="subcellular location">
    <subcellularLocation>
        <location evidence="1">Cytoplasm</location>
    </subcellularLocation>
</comment>
<comment type="similarity">
    <text evidence="1">Belongs to the phosphoglycerate kinase family.</text>
</comment>
<protein>
    <recommendedName>
        <fullName evidence="1">Phosphoglycerate kinase</fullName>
        <ecNumber evidence="1">2.7.2.3</ecNumber>
    </recommendedName>
</protein>
<name>PGK_THEKO</name>